<organism>
    <name type="scientific">Ectopseudomonas mendocina (strain ymp)</name>
    <name type="common">Pseudomonas mendocina</name>
    <dbReference type="NCBI Taxonomy" id="399739"/>
    <lineage>
        <taxon>Bacteria</taxon>
        <taxon>Pseudomonadati</taxon>
        <taxon>Pseudomonadota</taxon>
        <taxon>Gammaproteobacteria</taxon>
        <taxon>Pseudomonadales</taxon>
        <taxon>Pseudomonadaceae</taxon>
        <taxon>Ectopseudomonas</taxon>
    </lineage>
</organism>
<comment type="function">
    <text evidence="1">Specifically methylates the guanine in position 1835 (m2G1835) of 23S rRNA.</text>
</comment>
<comment type="catalytic activity">
    <reaction evidence="1">
        <text>guanosine(1835) in 23S rRNA + S-adenosyl-L-methionine = N(2)-methylguanosine(1835) in 23S rRNA + S-adenosyl-L-homocysteine + H(+)</text>
        <dbReference type="Rhea" id="RHEA:42744"/>
        <dbReference type="Rhea" id="RHEA-COMP:10217"/>
        <dbReference type="Rhea" id="RHEA-COMP:10218"/>
        <dbReference type="ChEBI" id="CHEBI:15378"/>
        <dbReference type="ChEBI" id="CHEBI:57856"/>
        <dbReference type="ChEBI" id="CHEBI:59789"/>
        <dbReference type="ChEBI" id="CHEBI:74269"/>
        <dbReference type="ChEBI" id="CHEBI:74481"/>
        <dbReference type="EC" id="2.1.1.174"/>
    </reaction>
</comment>
<comment type="subcellular location">
    <subcellularLocation>
        <location evidence="1">Cytoplasm</location>
    </subcellularLocation>
</comment>
<comment type="similarity">
    <text evidence="1">Belongs to the methyltransferase superfamily. RlmG family.</text>
</comment>
<comment type="sequence caution" evidence="2">
    <conflict type="erroneous initiation">
        <sequence resource="EMBL-CDS" id="ABP83519"/>
    </conflict>
</comment>
<evidence type="ECO:0000255" key="1">
    <source>
        <dbReference type="HAMAP-Rule" id="MF_01859"/>
    </source>
</evidence>
<evidence type="ECO:0000305" key="2"/>
<dbReference type="EC" id="2.1.1.174" evidence="1"/>
<dbReference type="EMBL" id="CP000680">
    <property type="protein sequence ID" value="ABP83519.1"/>
    <property type="status" value="ALT_INIT"/>
    <property type="molecule type" value="Genomic_DNA"/>
</dbReference>
<dbReference type="SMR" id="A4XQA3"/>
<dbReference type="STRING" id="399739.Pmen_0751"/>
<dbReference type="KEGG" id="pmy:Pmen_0751"/>
<dbReference type="PATRIC" id="fig|399739.8.peg.762"/>
<dbReference type="eggNOG" id="COG2813">
    <property type="taxonomic scope" value="Bacteria"/>
</dbReference>
<dbReference type="HOGENOM" id="CLU_040288_4_0_6"/>
<dbReference type="OrthoDB" id="29650at2"/>
<dbReference type="GO" id="GO:0005737">
    <property type="term" value="C:cytoplasm"/>
    <property type="evidence" value="ECO:0007669"/>
    <property type="project" value="UniProtKB-SubCell"/>
</dbReference>
<dbReference type="GO" id="GO:0052916">
    <property type="term" value="F:23S rRNA (guanine(1835)-N(2))-methyltransferase activity"/>
    <property type="evidence" value="ECO:0007669"/>
    <property type="project" value="UniProtKB-EC"/>
</dbReference>
<dbReference type="GO" id="GO:0003676">
    <property type="term" value="F:nucleic acid binding"/>
    <property type="evidence" value="ECO:0007669"/>
    <property type="project" value="InterPro"/>
</dbReference>
<dbReference type="CDD" id="cd02440">
    <property type="entry name" value="AdoMet_MTases"/>
    <property type="match status" value="1"/>
</dbReference>
<dbReference type="Gene3D" id="3.40.50.150">
    <property type="entry name" value="Vaccinia Virus protein VP39"/>
    <property type="match status" value="2"/>
</dbReference>
<dbReference type="HAMAP" id="MF_01859">
    <property type="entry name" value="23SrRNA_methyltr_G"/>
    <property type="match status" value="1"/>
</dbReference>
<dbReference type="InterPro" id="IPR002052">
    <property type="entry name" value="DNA_methylase_N6_adenine_CS"/>
</dbReference>
<dbReference type="InterPro" id="IPR017237">
    <property type="entry name" value="rRNA_m2G-MeTrfase_RlmG"/>
</dbReference>
<dbReference type="InterPro" id="IPR046977">
    <property type="entry name" value="RsmC/RlmG"/>
</dbReference>
<dbReference type="InterPro" id="IPR029063">
    <property type="entry name" value="SAM-dependent_MTases_sf"/>
</dbReference>
<dbReference type="InterPro" id="IPR007848">
    <property type="entry name" value="Small_mtfrase_dom"/>
</dbReference>
<dbReference type="PANTHER" id="PTHR47816:SF5">
    <property type="entry name" value="RIBOSOMAL RNA LARGE SUBUNIT METHYLTRANSFERASE G"/>
    <property type="match status" value="1"/>
</dbReference>
<dbReference type="PANTHER" id="PTHR47816">
    <property type="entry name" value="RIBOSOMAL RNA SMALL SUBUNIT METHYLTRANSFERASE C"/>
    <property type="match status" value="1"/>
</dbReference>
<dbReference type="Pfam" id="PF05175">
    <property type="entry name" value="MTS"/>
    <property type="match status" value="1"/>
</dbReference>
<dbReference type="PIRSF" id="PIRSF037565">
    <property type="entry name" value="RRNA_m2G_Mtase_RsmD_prd"/>
    <property type="match status" value="1"/>
</dbReference>
<dbReference type="SUPFAM" id="SSF53335">
    <property type="entry name" value="S-adenosyl-L-methionine-dependent methyltransferases"/>
    <property type="match status" value="1"/>
</dbReference>
<name>RLMG_ECTM1</name>
<reference key="1">
    <citation type="submission" date="2007-04" db="EMBL/GenBank/DDBJ databases">
        <title>Complete sequence of Pseudomonas mendocina ymp.</title>
        <authorList>
            <consortium name="US DOE Joint Genome Institute"/>
            <person name="Copeland A."/>
            <person name="Lucas S."/>
            <person name="Lapidus A."/>
            <person name="Barry K."/>
            <person name="Glavina del Rio T."/>
            <person name="Dalin E."/>
            <person name="Tice H."/>
            <person name="Pitluck S."/>
            <person name="Kiss H."/>
            <person name="Brettin T."/>
            <person name="Detter J.C."/>
            <person name="Bruce D."/>
            <person name="Han C."/>
            <person name="Schmutz J."/>
            <person name="Larimer F."/>
            <person name="Land M."/>
            <person name="Hauser L."/>
            <person name="Kyrpides N."/>
            <person name="Mikhailova N."/>
            <person name="Hersman L."/>
            <person name="Dubois J."/>
            <person name="Maurice P."/>
            <person name="Richardson P."/>
        </authorList>
    </citation>
    <scope>NUCLEOTIDE SEQUENCE [LARGE SCALE GENOMIC DNA]</scope>
    <source>
        <strain>ymp</strain>
    </source>
</reference>
<gene>
    <name evidence="1" type="primary">rlmG</name>
    <name type="ordered locus">Pmen_0751</name>
</gene>
<proteinExistence type="inferred from homology"/>
<sequence>MPIFTTPFASLELLRQPHQPNEPLQAFDAADEYLLNHLHEQGLRAEDSLLLLNDSFGALACSLAGRCQVTSSSDSHLGFIALENNLAGNGLNRDAVRFLPSSETPQGPFDWVLIRVPKTLALLEEQLIRLHGQLAPGARVVAAAMVKHLPRAAGDLLEKYIGPVQASLAVKKARLLLATPEAKAAPHSPYPTRYRLDKPALELINHANVFCRDGLDIGTRAFLPHLPRHLDARRVADLGCGNGVLGIAYALGSPQAQLTLVDESYMAVQSARENWAAALGERPATIRAGDGLAEQPAGSLDLVLCNPPFHQQQVVGDFLAWRMFQQARAALVTGGELWIVGNRHLGYHAKLARLFRGVEQVAANPKFVVLKASK</sequence>
<keyword id="KW-0963">Cytoplasm</keyword>
<keyword id="KW-0489">Methyltransferase</keyword>
<keyword id="KW-0698">rRNA processing</keyword>
<keyword id="KW-0949">S-adenosyl-L-methionine</keyword>
<keyword id="KW-0808">Transferase</keyword>
<feature type="chain" id="PRO_0000366478" description="Ribosomal RNA large subunit methyltransferase G">
    <location>
        <begin position="1"/>
        <end position="374"/>
    </location>
</feature>
<protein>
    <recommendedName>
        <fullName evidence="1">Ribosomal RNA large subunit methyltransferase G</fullName>
        <ecNumber evidence="1">2.1.1.174</ecNumber>
    </recommendedName>
    <alternativeName>
        <fullName evidence="1">23S rRNA m2G1835 methyltransferase</fullName>
    </alternativeName>
    <alternativeName>
        <fullName evidence="1">rRNA (guanine-N(2)-)-methyltransferase RlmG</fullName>
    </alternativeName>
</protein>
<accession>A4XQA3</accession>